<keyword id="KW-1185">Reference proteome</keyword>
<keyword id="KW-0687">Ribonucleoprotein</keyword>
<keyword id="KW-0689">Ribosomal protein</keyword>
<keyword id="KW-0694">RNA-binding</keyword>
<keyword id="KW-0699">rRNA-binding</keyword>
<proteinExistence type="inferred from homology"/>
<sequence>MAQQAKAHVKMQRVSVSKAKLVANLFRGKDATLALGILHNTPQKSAKIFIKLLNSAIANATNNHGMDASKLFVKEIHVNEGPTLKRFQPRSQGRAYEILKRTSHFSIILEERA</sequence>
<comment type="function">
    <text evidence="1">This protein binds specifically to 23S rRNA; its binding is stimulated by other ribosomal proteins, e.g. L4, L17, and L20. It is important during the early stages of 50S assembly. It makes multiple contacts with different domains of the 23S rRNA in the assembled 50S subunit and ribosome (By similarity).</text>
</comment>
<comment type="function">
    <text evidence="1">The globular domain of the protein is located near the polypeptide exit tunnel on the outside of the subunit, while an extended beta-hairpin is found that lines the wall of the exit tunnel in the center of the 70S ribosome.</text>
</comment>
<comment type="subunit">
    <text evidence="1">Part of the 50S ribosomal subunit.</text>
</comment>
<comment type="similarity">
    <text evidence="1">Belongs to the universal ribosomal protein uL22 family.</text>
</comment>
<feature type="chain" id="PRO_0000243173" description="Large ribosomal subunit protein uL22">
    <location>
        <begin position="1"/>
        <end position="113"/>
    </location>
</feature>
<gene>
    <name evidence="1" type="primary">rplV</name>
    <name type="ordered locus">MS53_0638</name>
</gene>
<accession>Q4A5C6</accession>
<protein>
    <recommendedName>
        <fullName evidence="1">Large ribosomal subunit protein uL22</fullName>
    </recommendedName>
    <alternativeName>
        <fullName evidence="2">50S ribosomal protein L22</fullName>
    </alternativeName>
</protein>
<reference key="1">
    <citation type="journal article" date="2005" name="J. Bacteriol.">
        <title>Swine and poultry pathogens: the complete genome sequences of two strains of Mycoplasma hyopneumoniae and a strain of Mycoplasma synoviae.</title>
        <authorList>
            <person name="Vasconcelos A.T.R."/>
            <person name="Ferreira H.B."/>
            <person name="Bizarro C.V."/>
            <person name="Bonatto S.L."/>
            <person name="Carvalho M.O."/>
            <person name="Pinto P.M."/>
            <person name="Almeida D.F."/>
            <person name="Almeida L.G.P."/>
            <person name="Almeida R."/>
            <person name="Alves-Junior L."/>
            <person name="Assuncao E.N."/>
            <person name="Azevedo V.A.C."/>
            <person name="Bogo M.R."/>
            <person name="Brigido M.M."/>
            <person name="Brocchi M."/>
            <person name="Burity H.A."/>
            <person name="Camargo A.A."/>
            <person name="Camargo S.S."/>
            <person name="Carepo M.S."/>
            <person name="Carraro D.M."/>
            <person name="de Mattos Cascardo J.C."/>
            <person name="Castro L.A."/>
            <person name="Cavalcanti G."/>
            <person name="Chemale G."/>
            <person name="Collevatti R.G."/>
            <person name="Cunha C.W."/>
            <person name="Dallagiovanna B."/>
            <person name="Dambros B.P."/>
            <person name="Dellagostin O.A."/>
            <person name="Falcao C."/>
            <person name="Fantinatti-Garboggini F."/>
            <person name="Felipe M.S.S."/>
            <person name="Fiorentin L."/>
            <person name="Franco G.R."/>
            <person name="Freitas N.S.A."/>
            <person name="Frias D."/>
            <person name="Grangeiro T.B."/>
            <person name="Grisard E.C."/>
            <person name="Guimaraes C.T."/>
            <person name="Hungria M."/>
            <person name="Jardim S.N."/>
            <person name="Krieger M.A."/>
            <person name="Laurino J.P."/>
            <person name="Lima L.F.A."/>
            <person name="Lopes M.I."/>
            <person name="Loreto E.L.S."/>
            <person name="Madeira H.M.F."/>
            <person name="Manfio G.P."/>
            <person name="Maranhao A.Q."/>
            <person name="Martinkovics C.T."/>
            <person name="Medeiros S.R.B."/>
            <person name="Moreira M.A.M."/>
            <person name="Neiva M."/>
            <person name="Ramalho-Neto C.E."/>
            <person name="Nicolas M.F."/>
            <person name="Oliveira S.C."/>
            <person name="Paixao R.F.C."/>
            <person name="Pedrosa F.O."/>
            <person name="Pena S.D.J."/>
            <person name="Pereira M."/>
            <person name="Pereira-Ferrari L."/>
            <person name="Piffer I."/>
            <person name="Pinto L.S."/>
            <person name="Potrich D.P."/>
            <person name="Salim A.C.M."/>
            <person name="Santos F.R."/>
            <person name="Schmitt R."/>
            <person name="Schneider M.P.C."/>
            <person name="Schrank A."/>
            <person name="Schrank I.S."/>
            <person name="Schuck A.F."/>
            <person name="Seuanez H.N."/>
            <person name="Silva D.W."/>
            <person name="Silva R."/>
            <person name="Silva S.C."/>
            <person name="Soares C.M.A."/>
            <person name="Souza K.R.L."/>
            <person name="Souza R.C."/>
            <person name="Staats C.C."/>
            <person name="Steffens M.B.R."/>
            <person name="Teixeira S.M.R."/>
            <person name="Urmenyi T.P."/>
            <person name="Vainstein M.H."/>
            <person name="Zuccherato L.W."/>
            <person name="Simpson A.J.G."/>
            <person name="Zaha A."/>
        </authorList>
    </citation>
    <scope>NUCLEOTIDE SEQUENCE [LARGE SCALE GENOMIC DNA]</scope>
    <source>
        <strain>53</strain>
    </source>
</reference>
<name>RL22_MYCS5</name>
<dbReference type="EMBL" id="AE017245">
    <property type="protein sequence ID" value="AAZ44045.1"/>
    <property type="molecule type" value="Genomic_DNA"/>
</dbReference>
<dbReference type="SMR" id="Q4A5C6"/>
<dbReference type="STRING" id="262723.MS53_0638"/>
<dbReference type="KEGG" id="msy:MS53_0638"/>
<dbReference type="eggNOG" id="COG0091">
    <property type="taxonomic scope" value="Bacteria"/>
</dbReference>
<dbReference type="HOGENOM" id="CLU_083987_3_1_14"/>
<dbReference type="OrthoDB" id="9805969at2"/>
<dbReference type="Proteomes" id="UP000000549">
    <property type="component" value="Chromosome"/>
</dbReference>
<dbReference type="GO" id="GO:0022625">
    <property type="term" value="C:cytosolic large ribosomal subunit"/>
    <property type="evidence" value="ECO:0007669"/>
    <property type="project" value="TreeGrafter"/>
</dbReference>
<dbReference type="GO" id="GO:0019843">
    <property type="term" value="F:rRNA binding"/>
    <property type="evidence" value="ECO:0007669"/>
    <property type="project" value="UniProtKB-UniRule"/>
</dbReference>
<dbReference type="GO" id="GO:0003735">
    <property type="term" value="F:structural constituent of ribosome"/>
    <property type="evidence" value="ECO:0007669"/>
    <property type="project" value="InterPro"/>
</dbReference>
<dbReference type="GO" id="GO:0006412">
    <property type="term" value="P:translation"/>
    <property type="evidence" value="ECO:0007669"/>
    <property type="project" value="UniProtKB-UniRule"/>
</dbReference>
<dbReference type="CDD" id="cd00336">
    <property type="entry name" value="Ribosomal_L22"/>
    <property type="match status" value="1"/>
</dbReference>
<dbReference type="Gene3D" id="3.90.470.10">
    <property type="entry name" value="Ribosomal protein L22/L17"/>
    <property type="match status" value="1"/>
</dbReference>
<dbReference type="HAMAP" id="MF_01331_B">
    <property type="entry name" value="Ribosomal_uL22_B"/>
    <property type="match status" value="1"/>
</dbReference>
<dbReference type="InterPro" id="IPR001063">
    <property type="entry name" value="Ribosomal_uL22"/>
</dbReference>
<dbReference type="InterPro" id="IPR005727">
    <property type="entry name" value="Ribosomal_uL22_bac/chlpt-type"/>
</dbReference>
<dbReference type="InterPro" id="IPR047867">
    <property type="entry name" value="Ribosomal_uL22_bac/org-type"/>
</dbReference>
<dbReference type="InterPro" id="IPR036394">
    <property type="entry name" value="Ribosomal_uL22_sf"/>
</dbReference>
<dbReference type="NCBIfam" id="TIGR01044">
    <property type="entry name" value="rplV_bact"/>
    <property type="match status" value="1"/>
</dbReference>
<dbReference type="PANTHER" id="PTHR13501">
    <property type="entry name" value="CHLOROPLAST 50S RIBOSOMAL PROTEIN L22-RELATED"/>
    <property type="match status" value="1"/>
</dbReference>
<dbReference type="PANTHER" id="PTHR13501:SF8">
    <property type="entry name" value="LARGE RIBOSOMAL SUBUNIT PROTEIN UL22M"/>
    <property type="match status" value="1"/>
</dbReference>
<dbReference type="Pfam" id="PF00237">
    <property type="entry name" value="Ribosomal_L22"/>
    <property type="match status" value="1"/>
</dbReference>
<dbReference type="SUPFAM" id="SSF54843">
    <property type="entry name" value="Ribosomal protein L22"/>
    <property type="match status" value="1"/>
</dbReference>
<organism>
    <name type="scientific">Mycoplasmopsis synoviae (strain 53)</name>
    <name type="common">Mycoplasma synoviae</name>
    <dbReference type="NCBI Taxonomy" id="262723"/>
    <lineage>
        <taxon>Bacteria</taxon>
        <taxon>Bacillati</taxon>
        <taxon>Mycoplasmatota</taxon>
        <taxon>Mycoplasmoidales</taxon>
        <taxon>Metamycoplasmataceae</taxon>
        <taxon>Mycoplasmopsis</taxon>
    </lineage>
</organism>
<evidence type="ECO:0000255" key="1">
    <source>
        <dbReference type="HAMAP-Rule" id="MF_01331"/>
    </source>
</evidence>
<evidence type="ECO:0000305" key="2"/>